<reference key="1">
    <citation type="journal article" date="2001" name="Nature">
        <title>Genome sequence of enterohaemorrhagic Escherichia coli O157:H7.</title>
        <authorList>
            <person name="Perna N.T."/>
            <person name="Plunkett G. III"/>
            <person name="Burland V."/>
            <person name="Mau B."/>
            <person name="Glasner J.D."/>
            <person name="Rose D.J."/>
            <person name="Mayhew G.F."/>
            <person name="Evans P.S."/>
            <person name="Gregor J."/>
            <person name="Kirkpatrick H.A."/>
            <person name="Posfai G."/>
            <person name="Hackett J."/>
            <person name="Klink S."/>
            <person name="Boutin A."/>
            <person name="Shao Y."/>
            <person name="Miller L."/>
            <person name="Grotbeck E.J."/>
            <person name="Davis N.W."/>
            <person name="Lim A."/>
            <person name="Dimalanta E.T."/>
            <person name="Potamousis K."/>
            <person name="Apodaca J."/>
            <person name="Anantharaman T.S."/>
            <person name="Lin J."/>
            <person name="Yen G."/>
            <person name="Schwartz D.C."/>
            <person name="Welch R.A."/>
            <person name="Blattner F.R."/>
        </authorList>
    </citation>
    <scope>NUCLEOTIDE SEQUENCE [LARGE SCALE GENOMIC DNA]</scope>
    <source>
        <strain>O157:H7 / EDL933 / ATCC 700927 / EHEC</strain>
    </source>
</reference>
<reference key="2">
    <citation type="journal article" date="2001" name="DNA Res.">
        <title>Complete genome sequence of enterohemorrhagic Escherichia coli O157:H7 and genomic comparison with a laboratory strain K-12.</title>
        <authorList>
            <person name="Hayashi T."/>
            <person name="Makino K."/>
            <person name="Ohnishi M."/>
            <person name="Kurokawa K."/>
            <person name="Ishii K."/>
            <person name="Yokoyama K."/>
            <person name="Han C.-G."/>
            <person name="Ohtsubo E."/>
            <person name="Nakayama K."/>
            <person name="Murata T."/>
            <person name="Tanaka M."/>
            <person name="Tobe T."/>
            <person name="Iida T."/>
            <person name="Takami H."/>
            <person name="Honda T."/>
            <person name="Sasakawa C."/>
            <person name="Ogasawara N."/>
            <person name="Yasunaga T."/>
            <person name="Kuhara S."/>
            <person name="Shiba T."/>
            <person name="Hattori M."/>
            <person name="Shinagawa H."/>
        </authorList>
    </citation>
    <scope>NUCLEOTIDE SEQUENCE [LARGE SCALE GENOMIC DNA]</scope>
    <source>
        <strain>O157:H7 / Sakai / RIMD 0509952 / EHEC</strain>
    </source>
</reference>
<keyword id="KW-0227">DNA damage</keyword>
<keyword id="KW-0234">DNA repair</keyword>
<keyword id="KW-0255">Endonuclease</keyword>
<keyword id="KW-0378">Hydrolase</keyword>
<keyword id="KW-0479">Metal-binding</keyword>
<keyword id="KW-0540">Nuclease</keyword>
<keyword id="KW-1185">Reference proteome</keyword>
<keyword id="KW-0862">Zinc</keyword>
<comment type="function">
    <text evidence="1">Endonuclease IV plays a role in DNA repair. It cleaves phosphodiester bonds at apurinic or apyrimidinic (AP) sites, generating a 3'-hydroxyl group and a 5'-terminal sugar phosphate.</text>
</comment>
<comment type="catalytic activity">
    <reaction evidence="1">
        <text>Endonucleolytic cleavage to 5'-phosphooligonucleotide end-products.</text>
        <dbReference type="EC" id="3.1.21.2"/>
    </reaction>
</comment>
<comment type="cofactor">
    <cofactor evidence="1">
        <name>Zn(2+)</name>
        <dbReference type="ChEBI" id="CHEBI:29105"/>
    </cofactor>
    <text evidence="1">Binds 3 Zn(2+) ions.</text>
</comment>
<comment type="similarity">
    <text evidence="1 2">Belongs to the AP endonuclease 2 family.</text>
</comment>
<proteinExistence type="inferred from homology"/>
<accession>P0A6C2</accession>
<accession>P12638</accession>
<accession>P78086</accession>
<evidence type="ECO:0000255" key="1">
    <source>
        <dbReference type="HAMAP-Rule" id="MF_00152"/>
    </source>
</evidence>
<evidence type="ECO:0000305" key="2"/>
<name>END4_ECO57</name>
<organism>
    <name type="scientific">Escherichia coli O157:H7</name>
    <dbReference type="NCBI Taxonomy" id="83334"/>
    <lineage>
        <taxon>Bacteria</taxon>
        <taxon>Pseudomonadati</taxon>
        <taxon>Pseudomonadota</taxon>
        <taxon>Gammaproteobacteria</taxon>
        <taxon>Enterobacterales</taxon>
        <taxon>Enterobacteriaceae</taxon>
        <taxon>Escherichia</taxon>
    </lineage>
</organism>
<protein>
    <recommendedName>
        <fullName evidence="1">Probable endonuclease 4</fullName>
        <ecNumber evidence="1">3.1.21.2</ecNumber>
    </recommendedName>
    <alternativeName>
        <fullName evidence="1">Endodeoxyribonuclease IV</fullName>
    </alternativeName>
    <alternativeName>
        <fullName evidence="1">Endonuclease IV</fullName>
    </alternativeName>
</protein>
<sequence>MKYIGAHVSAAGGLANAAIRAAEIDATAFALFTKNQRQWRAAPLTTQTIDEFKAACEKYHYTSAQILPHDSYLINLGHPVTEALEKSRDAFIDEMQRCEQLGLSLLNFHPGSHLMQISEEDCLARIAESINIALDKTQGVTAVIENTAGQGSNLGFKFEHLAAIIDGVEDKSRVGVCIDTCHAFAAGYDLRTPAECEKTFADFARTVGFKYLRGMHLNDAKSTFGSRVDRHHSLGEGNIGHDAFRWIMQDDRFDGIPLILETINPDIWAEEIAWLKAQQTEKAVA</sequence>
<feature type="chain" id="PRO_0000190839" description="Probable endonuclease 4">
    <location>
        <begin position="1"/>
        <end position="285"/>
    </location>
</feature>
<feature type="binding site" evidence="1">
    <location>
        <position position="69"/>
    </location>
    <ligand>
        <name>Zn(2+)</name>
        <dbReference type="ChEBI" id="CHEBI:29105"/>
        <label>1</label>
    </ligand>
</feature>
<feature type="binding site" evidence="1">
    <location>
        <position position="109"/>
    </location>
    <ligand>
        <name>Zn(2+)</name>
        <dbReference type="ChEBI" id="CHEBI:29105"/>
        <label>1</label>
    </ligand>
</feature>
<feature type="binding site" evidence="1">
    <location>
        <position position="145"/>
    </location>
    <ligand>
        <name>Zn(2+)</name>
        <dbReference type="ChEBI" id="CHEBI:29105"/>
        <label>1</label>
    </ligand>
</feature>
<feature type="binding site" evidence="1">
    <location>
        <position position="145"/>
    </location>
    <ligand>
        <name>Zn(2+)</name>
        <dbReference type="ChEBI" id="CHEBI:29105"/>
        <label>2</label>
    </ligand>
</feature>
<feature type="binding site" evidence="1">
    <location>
        <position position="179"/>
    </location>
    <ligand>
        <name>Zn(2+)</name>
        <dbReference type="ChEBI" id="CHEBI:29105"/>
        <label>2</label>
    </ligand>
</feature>
<feature type="binding site" evidence="1">
    <location>
        <position position="182"/>
    </location>
    <ligand>
        <name>Zn(2+)</name>
        <dbReference type="ChEBI" id="CHEBI:29105"/>
        <label>3</label>
    </ligand>
</feature>
<feature type="binding site" evidence="1">
    <location>
        <position position="216"/>
    </location>
    <ligand>
        <name>Zn(2+)</name>
        <dbReference type="ChEBI" id="CHEBI:29105"/>
        <label>2</label>
    </ligand>
</feature>
<feature type="binding site" evidence="1">
    <location>
        <position position="229"/>
    </location>
    <ligand>
        <name>Zn(2+)</name>
        <dbReference type="ChEBI" id="CHEBI:29105"/>
        <label>3</label>
    </ligand>
</feature>
<feature type="binding site" evidence="1">
    <location>
        <position position="231"/>
    </location>
    <ligand>
        <name>Zn(2+)</name>
        <dbReference type="ChEBI" id="CHEBI:29105"/>
        <label>3</label>
    </ligand>
</feature>
<feature type="binding site" evidence="1">
    <location>
        <position position="261"/>
    </location>
    <ligand>
        <name>Zn(2+)</name>
        <dbReference type="ChEBI" id="CHEBI:29105"/>
        <label>2</label>
    </ligand>
</feature>
<dbReference type="EC" id="3.1.21.2" evidence="1"/>
<dbReference type="EMBL" id="AE005174">
    <property type="protein sequence ID" value="AAG57297.1"/>
    <property type="molecule type" value="Genomic_DNA"/>
</dbReference>
<dbReference type="EMBL" id="BA000007">
    <property type="protein sequence ID" value="BAB36474.1"/>
    <property type="molecule type" value="Genomic_DNA"/>
</dbReference>
<dbReference type="PIR" id="C91010">
    <property type="entry name" value="C91010"/>
</dbReference>
<dbReference type="RefSeq" id="NP_311078.1">
    <property type="nucleotide sequence ID" value="NC_002695.1"/>
</dbReference>
<dbReference type="RefSeq" id="WP_000873894.1">
    <property type="nucleotide sequence ID" value="NZ_VOAI01000001.1"/>
</dbReference>
<dbReference type="SMR" id="P0A6C2"/>
<dbReference type="STRING" id="155864.Z3416"/>
<dbReference type="GeneID" id="916755"/>
<dbReference type="KEGG" id="ece:Z3416"/>
<dbReference type="KEGG" id="ecs:ECs_3051"/>
<dbReference type="PATRIC" id="fig|386585.9.peg.3180"/>
<dbReference type="eggNOG" id="COG0648">
    <property type="taxonomic scope" value="Bacteria"/>
</dbReference>
<dbReference type="HOGENOM" id="CLU_025885_0_4_6"/>
<dbReference type="OMA" id="HPGSHLR"/>
<dbReference type="Proteomes" id="UP000000558">
    <property type="component" value="Chromosome"/>
</dbReference>
<dbReference type="Proteomes" id="UP000002519">
    <property type="component" value="Chromosome"/>
</dbReference>
<dbReference type="GO" id="GO:0008833">
    <property type="term" value="F:deoxyribonuclease IV (phage-T4-induced) activity"/>
    <property type="evidence" value="ECO:0007669"/>
    <property type="project" value="UniProtKB-UniRule"/>
</dbReference>
<dbReference type="GO" id="GO:0003677">
    <property type="term" value="F:DNA binding"/>
    <property type="evidence" value="ECO:0007669"/>
    <property type="project" value="InterPro"/>
</dbReference>
<dbReference type="GO" id="GO:0003906">
    <property type="term" value="F:DNA-(apurinic or apyrimidinic site) endonuclease activity"/>
    <property type="evidence" value="ECO:0007669"/>
    <property type="project" value="TreeGrafter"/>
</dbReference>
<dbReference type="GO" id="GO:0008081">
    <property type="term" value="F:phosphoric diester hydrolase activity"/>
    <property type="evidence" value="ECO:0007669"/>
    <property type="project" value="TreeGrafter"/>
</dbReference>
<dbReference type="GO" id="GO:0008270">
    <property type="term" value="F:zinc ion binding"/>
    <property type="evidence" value="ECO:0007669"/>
    <property type="project" value="UniProtKB-UniRule"/>
</dbReference>
<dbReference type="GO" id="GO:0006284">
    <property type="term" value="P:base-excision repair"/>
    <property type="evidence" value="ECO:0007669"/>
    <property type="project" value="TreeGrafter"/>
</dbReference>
<dbReference type="CDD" id="cd00019">
    <property type="entry name" value="AP2Ec"/>
    <property type="match status" value="1"/>
</dbReference>
<dbReference type="FunFam" id="3.20.20.150:FF:000001">
    <property type="entry name" value="Probable endonuclease 4"/>
    <property type="match status" value="1"/>
</dbReference>
<dbReference type="Gene3D" id="3.20.20.150">
    <property type="entry name" value="Divalent-metal-dependent TIM barrel enzymes"/>
    <property type="match status" value="1"/>
</dbReference>
<dbReference type="HAMAP" id="MF_00152">
    <property type="entry name" value="Nfo"/>
    <property type="match status" value="1"/>
</dbReference>
<dbReference type="InterPro" id="IPR001719">
    <property type="entry name" value="AP_endonuc_2"/>
</dbReference>
<dbReference type="InterPro" id="IPR018246">
    <property type="entry name" value="AP_endonuc_F2_Zn_BS"/>
</dbReference>
<dbReference type="InterPro" id="IPR036237">
    <property type="entry name" value="Xyl_isomerase-like_sf"/>
</dbReference>
<dbReference type="InterPro" id="IPR013022">
    <property type="entry name" value="Xyl_isomerase-like_TIM-brl"/>
</dbReference>
<dbReference type="NCBIfam" id="TIGR00587">
    <property type="entry name" value="nfo"/>
    <property type="match status" value="1"/>
</dbReference>
<dbReference type="NCBIfam" id="NF002199">
    <property type="entry name" value="PRK01060.1-4"/>
    <property type="match status" value="1"/>
</dbReference>
<dbReference type="PANTHER" id="PTHR21445:SF0">
    <property type="entry name" value="APURINIC-APYRIMIDINIC ENDONUCLEASE"/>
    <property type="match status" value="1"/>
</dbReference>
<dbReference type="PANTHER" id="PTHR21445">
    <property type="entry name" value="ENDONUCLEASE IV ENDODEOXYRIBONUCLEASE IV"/>
    <property type="match status" value="1"/>
</dbReference>
<dbReference type="Pfam" id="PF01261">
    <property type="entry name" value="AP_endonuc_2"/>
    <property type="match status" value="1"/>
</dbReference>
<dbReference type="SMART" id="SM00518">
    <property type="entry name" value="AP2Ec"/>
    <property type="match status" value="1"/>
</dbReference>
<dbReference type="SUPFAM" id="SSF51658">
    <property type="entry name" value="Xylose isomerase-like"/>
    <property type="match status" value="1"/>
</dbReference>
<dbReference type="PROSITE" id="PS00729">
    <property type="entry name" value="AP_NUCLEASE_F2_1"/>
    <property type="match status" value="1"/>
</dbReference>
<dbReference type="PROSITE" id="PS00730">
    <property type="entry name" value="AP_NUCLEASE_F2_2"/>
    <property type="match status" value="1"/>
</dbReference>
<dbReference type="PROSITE" id="PS00731">
    <property type="entry name" value="AP_NUCLEASE_F2_3"/>
    <property type="match status" value="1"/>
</dbReference>
<dbReference type="PROSITE" id="PS51432">
    <property type="entry name" value="AP_NUCLEASE_F2_4"/>
    <property type="match status" value="1"/>
</dbReference>
<gene>
    <name evidence="1" type="primary">nfo</name>
    <name type="ordered locus">Z3416</name>
    <name type="ordered locus">ECs3051</name>
</gene>